<dbReference type="EC" id="1.13.12.3"/>
<dbReference type="EMBL" id="M91609">
    <property type="protein sequence ID" value="AAA98149.1"/>
    <property type="molecule type" value="Genomic_DNA"/>
</dbReference>
<dbReference type="EMBL" id="CP000637">
    <property type="protein sequence ID" value="ACM39708.1"/>
    <property type="molecule type" value="Genomic_DNA"/>
</dbReference>
<dbReference type="PIR" id="S30105">
    <property type="entry name" value="S30105"/>
</dbReference>
<dbReference type="SMR" id="Q04564"/>
<dbReference type="KEGG" id="avi:Avi_8288"/>
<dbReference type="HOGENOM" id="CLU_021400_0_0_5"/>
<dbReference type="UniPathway" id="UPA00151"/>
<dbReference type="Proteomes" id="UP000001596">
    <property type="component" value="Plasmid pTiS4"/>
</dbReference>
<dbReference type="GO" id="GO:0001716">
    <property type="term" value="F:L-amino-acid oxidase activity"/>
    <property type="evidence" value="ECO:0007669"/>
    <property type="project" value="TreeGrafter"/>
</dbReference>
<dbReference type="GO" id="GO:0050361">
    <property type="term" value="F:tryptophan 2-monooxygenase activity"/>
    <property type="evidence" value="ECO:0007669"/>
    <property type="project" value="UniProtKB-EC"/>
</dbReference>
<dbReference type="GO" id="GO:0009063">
    <property type="term" value="P:amino acid catabolic process"/>
    <property type="evidence" value="ECO:0007669"/>
    <property type="project" value="TreeGrafter"/>
</dbReference>
<dbReference type="GO" id="GO:0009851">
    <property type="term" value="P:auxin biosynthetic process"/>
    <property type="evidence" value="ECO:0007669"/>
    <property type="project" value="UniProtKB-UniPathway"/>
</dbReference>
<dbReference type="Gene3D" id="1.10.405.40">
    <property type="match status" value="1"/>
</dbReference>
<dbReference type="Gene3D" id="3.90.660.10">
    <property type="match status" value="1"/>
</dbReference>
<dbReference type="Gene3D" id="3.50.50.60">
    <property type="entry name" value="FAD/NAD(P)-binding domain"/>
    <property type="match status" value="1"/>
</dbReference>
<dbReference type="InterPro" id="IPR002937">
    <property type="entry name" value="Amino_oxidase"/>
</dbReference>
<dbReference type="InterPro" id="IPR036188">
    <property type="entry name" value="FAD/NAD-bd_sf"/>
</dbReference>
<dbReference type="InterPro" id="IPR050281">
    <property type="entry name" value="Flavin_monoamine_oxidase"/>
</dbReference>
<dbReference type="InterPro" id="IPR006064">
    <property type="entry name" value="Glycosidase"/>
</dbReference>
<dbReference type="InterPro" id="IPR012142">
    <property type="entry name" value="Trp_2-mOase"/>
</dbReference>
<dbReference type="PANTHER" id="PTHR10742:SF342">
    <property type="entry name" value="AMINE OXIDASE"/>
    <property type="match status" value="1"/>
</dbReference>
<dbReference type="PANTHER" id="PTHR10742">
    <property type="entry name" value="FLAVIN MONOAMINE OXIDASE"/>
    <property type="match status" value="1"/>
</dbReference>
<dbReference type="Pfam" id="PF01593">
    <property type="entry name" value="Amino_oxidase"/>
    <property type="match status" value="1"/>
</dbReference>
<dbReference type="Pfam" id="PF02027">
    <property type="entry name" value="RolB_RolC"/>
    <property type="match status" value="1"/>
</dbReference>
<dbReference type="PIRSF" id="PIRSF000319">
    <property type="entry name" value="Trp_2-mono_O2ase"/>
    <property type="match status" value="1"/>
</dbReference>
<dbReference type="PRINTS" id="PR00419">
    <property type="entry name" value="ADXRDTASE"/>
</dbReference>
<dbReference type="SUPFAM" id="SSF54373">
    <property type="entry name" value="FAD-linked reductases, C-terminal domain"/>
    <property type="match status" value="1"/>
</dbReference>
<dbReference type="SUPFAM" id="SSF51905">
    <property type="entry name" value="FAD/NAD(P)-binding domain"/>
    <property type="match status" value="1"/>
</dbReference>
<accession>Q04564</accession>
<accession>B9K454</accession>
<comment type="catalytic activity">
    <reaction>
        <text>L-tryptophan + O2 = indole-3-acetamide + CO2 + H2O</text>
        <dbReference type="Rhea" id="RHEA:16165"/>
        <dbReference type="ChEBI" id="CHEBI:15377"/>
        <dbReference type="ChEBI" id="CHEBI:15379"/>
        <dbReference type="ChEBI" id="CHEBI:16031"/>
        <dbReference type="ChEBI" id="CHEBI:16526"/>
        <dbReference type="ChEBI" id="CHEBI:57912"/>
        <dbReference type="EC" id="1.13.12.3"/>
    </reaction>
</comment>
<comment type="cofactor">
    <cofactor evidence="1">
        <name>FMN</name>
        <dbReference type="ChEBI" id="CHEBI:58210"/>
    </cofactor>
    <text evidence="1">Binds 1 FMN per subunit.</text>
</comment>
<comment type="pathway">
    <text>Plant hormone metabolism; auxin biosynthesis.</text>
</comment>
<comment type="similarity">
    <text evidence="2">Belongs to the tryptophan 2-monooxygenase family.</text>
</comment>
<keyword id="KW-0073">Auxin biosynthesis</keyword>
<keyword id="KW-0192">Crown gall tumor</keyword>
<keyword id="KW-0285">Flavoprotein</keyword>
<keyword id="KW-0288">FMN</keyword>
<keyword id="KW-0503">Monooxygenase</keyword>
<keyword id="KW-0560">Oxidoreductase</keyword>
<keyword id="KW-0614">Plasmid</keyword>
<keyword id="KW-1185">Reference proteome</keyword>
<sequence length="723" mass="80803">MANFFYSRITNRSYSTKNLLNIEDKGRLKDELEKTRQTNICEICLHPRGHRASVCRQILMGFAYTSKTVLEGLLSTMPHDDAPLGKIFVTDLPPYDEQVPQVLLMQAAALVTSYEYSFEDLAYFLVLPLQMALMQKSPSLGKDFPVISGYSITKDSVHSPVAFGRNLMPRGVSCEFPQIDVLYDYRGFLEGGAFSEGVTSFPKETKKPKVAVIGAGISGLVSATLLLRNGIDDVTIFEAKNVVGGRAHTHFFKGEPSVCAELGAMRFPRSQACLFYLLEYLGINAMTKFPNPGTVDTGLYYRGRSYNWKAHSLPPAIFNRVHKGWRTFLHAGFVDGVAAFASPFTLTECLRLRNYEFASSLWQKWLDAFSSETFSSGIERIFRGAHPPGGEKWTRDVDMELFKELGVGSGGFGPVFGCGFIEILRLIVNGYEDNVMLLLDGIEEIPRRLSQQKVGSYSIRDRIIHKEVKEIIRTESGISLAIGEGMHATFDRVIVTSGFTNIQLRHLLTNDDSFFSYDVNQAIENSHMTGSSKLFVLTQNKFWKAEELPSCILTTGVAKAVYCLDYEPDKPSGKGLVLLSYTWEDDSHKLLTFDKGERFQILKRDLAKSYPRFADLLEPADGDYDNNIIQHDWILDPYAGGAFKLNRRCEDVYSKRLFFQPLRLNGEPDGRVCLAGCSCSFSGGWVEGAIQTACNAAMATIRDAGGLISGDNPLTNEFVNYHY</sequence>
<proteinExistence type="inferred from homology"/>
<reference key="1">
    <citation type="journal article" date="1992" name="Mol. Gen. Genet.">
        <title>Organization and functional analysis of three T-DNAs from the vitopine Ti plasmid pTiS4.</title>
        <authorList>
            <person name="Canaday J."/>
            <person name="Gerard J.-C."/>
            <person name="Crouzet P."/>
            <person name="Otten L."/>
        </authorList>
    </citation>
    <scope>NUCLEOTIDE SEQUENCE [GENOMIC DNA]</scope>
</reference>
<reference key="2">
    <citation type="journal article" date="2009" name="J. Bacteriol.">
        <title>Genome sequences of three Agrobacterium biovars help elucidate the evolution of multichromosome genomes in bacteria.</title>
        <authorList>
            <person name="Slater S.C."/>
            <person name="Goldman B.S."/>
            <person name="Goodner B."/>
            <person name="Setubal J.C."/>
            <person name="Farrand S.K."/>
            <person name="Nester E.W."/>
            <person name="Burr T.J."/>
            <person name="Banta L."/>
            <person name="Dickerman A.W."/>
            <person name="Paulsen I."/>
            <person name="Otten L."/>
            <person name="Suen G."/>
            <person name="Welch R."/>
            <person name="Almeida N.F."/>
            <person name="Arnold F."/>
            <person name="Burton O.T."/>
            <person name="Du Z."/>
            <person name="Ewing A."/>
            <person name="Godsy E."/>
            <person name="Heisel S."/>
            <person name="Houmiel K.L."/>
            <person name="Jhaveri J."/>
            <person name="Lu J."/>
            <person name="Miller N.M."/>
            <person name="Norton S."/>
            <person name="Chen Q."/>
            <person name="Phoolcharoen W."/>
            <person name="Ohlin V."/>
            <person name="Ondrusek D."/>
            <person name="Pride N."/>
            <person name="Stricklin S.L."/>
            <person name="Sun J."/>
            <person name="Wheeler C."/>
            <person name="Wilson L."/>
            <person name="Zhu H."/>
            <person name="Wood D.W."/>
        </authorList>
    </citation>
    <scope>NUCLEOTIDE SEQUENCE [LARGE SCALE GENOMIC DNA]</scope>
    <source>
        <strain>ATCC BAA-846 / DSM 112012 / S4</strain>
    </source>
</reference>
<organism>
    <name type="scientific">Allorhizobium ampelinum (strain ATCC BAA-846 / DSM 112012 / S4)</name>
    <name type="common">Agrobacterium vitis (strain S4)</name>
    <dbReference type="NCBI Taxonomy" id="311402"/>
    <lineage>
        <taxon>Bacteria</taxon>
        <taxon>Pseudomonadati</taxon>
        <taxon>Pseudomonadota</taxon>
        <taxon>Alphaproteobacteria</taxon>
        <taxon>Hyphomicrobiales</taxon>
        <taxon>Rhizobiaceae</taxon>
        <taxon>Rhizobium/Agrobacterium group</taxon>
        <taxon>Allorhizobium</taxon>
        <taxon>Allorhizobium ampelinum</taxon>
    </lineage>
</organism>
<evidence type="ECO:0000250" key="1"/>
<evidence type="ECO:0000305" key="2"/>
<protein>
    <recommendedName>
        <fullName>Tryptophan 2-monooxygenase</fullName>
        <ecNumber>1.13.12.3</ecNumber>
    </recommendedName>
</protein>
<name>TR2M_ALLAM</name>
<geneLocation type="plasmid">
    <name>pTiS4</name>
</geneLocation>
<feature type="chain" id="PRO_0000065588" description="Tryptophan 2-monooxygenase">
    <location>
        <begin position="1"/>
        <end position="723"/>
    </location>
</feature>
<feature type="binding site" evidence="1">
    <location>
        <position position="218"/>
    </location>
    <ligand>
        <name>FMN</name>
        <dbReference type="ChEBI" id="CHEBI:58210"/>
    </ligand>
</feature>
<feature type="binding site" evidence="1">
    <location>
        <position position="238"/>
    </location>
    <ligand>
        <name>FMN</name>
        <dbReference type="ChEBI" id="CHEBI:58210"/>
    </ligand>
</feature>
<feature type="binding site" evidence="1">
    <location>
        <position position="246"/>
    </location>
    <ligand>
        <name>FMN</name>
        <dbReference type="ChEBI" id="CHEBI:58210"/>
    </ligand>
</feature>
<feature type="binding site" evidence="1">
    <location>
        <position position="266"/>
    </location>
    <ligand>
        <name>FMN</name>
        <dbReference type="ChEBI" id="CHEBI:58210"/>
    </ligand>
</feature>
<feature type="binding site" evidence="1">
    <location>
        <position position="266"/>
    </location>
    <ligand>
        <name>substrate</name>
    </ligand>
</feature>
<gene>
    <name type="primary">iaaM</name>
    <name type="synonym">tms1</name>
    <name type="ordered locus">Avi_8288</name>
</gene>